<protein>
    <recommendedName>
        <fullName>U3 small nucleolar RNA-associated protein 12</fullName>
        <shortName>U3 snoRNA-associated protein 12</shortName>
    </recommendedName>
    <alternativeName>
        <fullName>DOM34-interacting protein 2</fullName>
    </alternativeName>
    <alternativeName>
        <fullName>U three protein 12</fullName>
    </alternativeName>
</protein>
<evidence type="ECO:0000256" key="1">
    <source>
        <dbReference type="SAM" id="MobiDB-lite"/>
    </source>
</evidence>
<evidence type="ECO:0000269" key="2">
    <source>
    </source>
</evidence>
<evidence type="ECO:0000269" key="3">
    <source>
    </source>
</evidence>
<evidence type="ECO:0000305" key="4"/>
<name>UTP12_YEAST</name>
<accession>Q12220</accession>
<accession>D6VYC4</accession>
<accession>Q05386</accession>
<sequence>MVKSYQRFEQAAAFGVIASNANCVWIPASSGNSNGSGPGQLITSALEDVNIWDIKTGDLVSKLSDGLPPGASDARGAKPAECTYLEAHKDTDLLAVGYADGVIKVWDLMSKTVLLNFNGHKAAITLLQFDGTGTRLISGSKDSNIIVWDLVGEVGLYKLRSHKDSITGFWCQGEDWLISTSKDGMIKLWDLKTHQCIETHIAHTGECWGLAVKDDLLITTGTDSQVKIWKLDIENDKMGGKLTEMGIFEKQSKQRGLKIEFITNSSDKTSFFYIQNADKTIETFRIRKEEEIARGLKKREKRLKEKGLTEEEIAKSIKESYSSFILHPFQTIRSLYKIKSASWTTVSSSKLELVLTTSSNTIEYYSIPYEKRDPTSPAPLKTHTIELQGQRTDVRSIDISDDNKLLATASNGSLKIWNIKTHKCIRTFECGYALTCKFLPGGLLVILGTRNGELQLFDLASSSLLDTIEDAHDAAIWSLDLTSDGKRLVTGSADKTVKFWDFKVENSLVPGTKNKFLPVLKLHHDTTLELTDDILCVRVSPDDRYLAISLLDNTVKVFFLDSMKFYLSLYGHKLPVLSIDISFDSKMIITSSADKNIKIWGLDFGDCHKSLFAHQDSIMNVKFLPQSHNFFSCSKDAVVKYWDGEKFECIQKLYAHQSEVWALAVATDGGFVVSSSHDHSIRIWEETEDQVFLEEEKEKELEEQYEDTLLTSLEEGNGDDAFKADASGEGVEDEASGVHKQTLESLKAGERLMEALDLGIAEIEGLEAYNRDMKLWQRKKLGEAPIKPQGNAVLIAVNKTPEQYIMDTLLRIRMSQLEDALMVMPFSYVLKFLKFIDTVMQNKTLLHSHLPLICKNLFFIIKFNHKELVSQKNEELKLQINRVKTELRSALKSTEDDLGFNVQGLKFVKQQWNLRHNYEFVDEYDQQEKESNSARKRVFGTVI</sequence>
<proteinExistence type="evidence at protein level"/>
<gene>
    <name type="primary">DIP2</name>
    <name type="synonym">UTP12</name>
    <name type="ordered locus">YLR129W</name>
    <name type="ORF">L3116</name>
    <name type="ORF">L9233.1</name>
</gene>
<comment type="function">
    <text evidence="2">Involved in nucleolar processing of pre-18S ribosomal RNA.</text>
</comment>
<comment type="subunit">
    <text evidence="2">Interacts with snoRNA U3. Interacts with MPP10. Component of the ribosomal small subunit (SSU) processome composed of at least 40 protein subunits and snoRNA U3.</text>
</comment>
<comment type="interaction">
    <interactant intactId="EBI-5896">
        <id>Q12220</id>
    </interactant>
    <interactant intactId="EBI-14332">
        <id>P25635</id>
        <label>PWP2</label>
    </interactant>
    <organismsDiffer>false</organismsDiffer>
    <experiments>12</experiments>
</comment>
<comment type="interaction">
    <interactant intactId="EBI-5896">
        <id>Q12220</id>
    </interactant>
    <interactant intactId="EBI-34702">
        <id>Q05946</id>
        <label>UTP13</label>
    </interactant>
    <organismsDiffer>false</organismsDiffer>
    <experiments>8</experiments>
</comment>
<comment type="interaction">
    <interactant intactId="EBI-5896">
        <id>Q12220</id>
    </interactant>
    <interactant intactId="EBI-359">
        <id>Q06078</id>
        <label>UTP21</label>
    </interactant>
    <organismsDiffer>false</organismsDiffer>
    <experiments>3</experiments>
</comment>
<comment type="subcellular location">
    <subcellularLocation>
        <location evidence="2">Nucleus</location>
        <location evidence="2">Nucleolus</location>
    </subcellularLocation>
</comment>
<comment type="miscellaneous">
    <text evidence="3">Present with 9620 molecules/cell in log phase SD medium.</text>
</comment>
<comment type="similarity">
    <text evidence="4">Belongs to the WD repeat WDR3/UTP12 family.</text>
</comment>
<dbReference type="EMBL" id="U53877">
    <property type="protein sequence ID" value="AAB82375.1"/>
    <property type="molecule type" value="Genomic_DNA"/>
</dbReference>
<dbReference type="EMBL" id="U53881">
    <property type="protein sequence ID" value="AAB82402.1"/>
    <property type="molecule type" value="Genomic_DNA"/>
</dbReference>
<dbReference type="EMBL" id="X91258">
    <property type="protein sequence ID" value="CAA62640.1"/>
    <property type="molecule type" value="Genomic_DNA"/>
</dbReference>
<dbReference type="EMBL" id="Z73301">
    <property type="protein sequence ID" value="CAA97699.1"/>
    <property type="molecule type" value="Genomic_DNA"/>
</dbReference>
<dbReference type="EMBL" id="Z73302">
    <property type="protein sequence ID" value="CAA97700.1"/>
    <property type="molecule type" value="Genomic_DNA"/>
</dbReference>
<dbReference type="EMBL" id="X89514">
    <property type="protein sequence ID" value="CAA61707.1"/>
    <property type="molecule type" value="Genomic_DNA"/>
</dbReference>
<dbReference type="EMBL" id="BK006945">
    <property type="protein sequence ID" value="DAA09440.1"/>
    <property type="molecule type" value="Genomic_DNA"/>
</dbReference>
<dbReference type="PIR" id="S59317">
    <property type="entry name" value="S59317"/>
</dbReference>
<dbReference type="RefSeq" id="NP_013230.1">
    <property type="nucleotide sequence ID" value="NM_001182016.1"/>
</dbReference>
<dbReference type="PDB" id="5WLC">
    <property type="method" value="EM"/>
    <property type="resolution" value="3.80 A"/>
    <property type="chains" value="LQ=1-943"/>
</dbReference>
<dbReference type="PDB" id="5WYJ">
    <property type="method" value="EM"/>
    <property type="resolution" value="8.70 A"/>
    <property type="chains" value="BB=1-943"/>
</dbReference>
<dbReference type="PDB" id="5WYK">
    <property type="method" value="EM"/>
    <property type="resolution" value="4.50 A"/>
    <property type="chains" value="BB=1-943"/>
</dbReference>
<dbReference type="PDB" id="6KE6">
    <property type="method" value="EM"/>
    <property type="resolution" value="3.40 A"/>
    <property type="chains" value="B2=1-943"/>
</dbReference>
<dbReference type="PDB" id="6LQP">
    <property type="method" value="EM"/>
    <property type="resolution" value="3.20 A"/>
    <property type="chains" value="B2=1-943"/>
</dbReference>
<dbReference type="PDB" id="6LQQ">
    <property type="method" value="EM"/>
    <property type="resolution" value="4.10 A"/>
    <property type="chains" value="B2=1-943"/>
</dbReference>
<dbReference type="PDB" id="6LQR">
    <property type="method" value="EM"/>
    <property type="resolution" value="8.60 A"/>
    <property type="chains" value="B2=1-943"/>
</dbReference>
<dbReference type="PDB" id="6LQS">
    <property type="method" value="EM"/>
    <property type="resolution" value="3.80 A"/>
    <property type="chains" value="B2=1-943"/>
</dbReference>
<dbReference type="PDB" id="6LQT">
    <property type="method" value="EM"/>
    <property type="resolution" value="4.90 A"/>
    <property type="chains" value="B2=1-943"/>
</dbReference>
<dbReference type="PDB" id="6LQU">
    <property type="method" value="EM"/>
    <property type="resolution" value="3.70 A"/>
    <property type="chains" value="B2=1-943"/>
</dbReference>
<dbReference type="PDB" id="6LQV">
    <property type="method" value="EM"/>
    <property type="resolution" value="4.80 A"/>
    <property type="chains" value="B2=1-943"/>
</dbReference>
<dbReference type="PDB" id="6ND4">
    <property type="method" value="EM"/>
    <property type="resolution" value="4.30 A"/>
    <property type="chains" value="Q=1-943"/>
</dbReference>
<dbReference type="PDB" id="6ZQA">
    <property type="method" value="EM"/>
    <property type="resolution" value="4.40 A"/>
    <property type="chains" value="UL=1-943"/>
</dbReference>
<dbReference type="PDB" id="6ZQB">
    <property type="method" value="EM"/>
    <property type="resolution" value="3.90 A"/>
    <property type="chains" value="UL=1-943"/>
</dbReference>
<dbReference type="PDB" id="6ZQC">
    <property type="method" value="EM"/>
    <property type="resolution" value="3.80 A"/>
    <property type="chains" value="UL=1-943"/>
</dbReference>
<dbReference type="PDB" id="6ZQD">
    <property type="method" value="EM"/>
    <property type="resolution" value="3.80 A"/>
    <property type="chains" value="UL=1-943"/>
</dbReference>
<dbReference type="PDB" id="6ZQE">
    <property type="method" value="EM"/>
    <property type="resolution" value="7.10 A"/>
    <property type="chains" value="UL=1-943"/>
</dbReference>
<dbReference type="PDB" id="6ZQF">
    <property type="method" value="EM"/>
    <property type="resolution" value="4.90 A"/>
    <property type="chains" value="UL=1-943"/>
</dbReference>
<dbReference type="PDB" id="7AJT">
    <property type="method" value="EM"/>
    <property type="resolution" value="4.60 A"/>
    <property type="chains" value="UL=1-943"/>
</dbReference>
<dbReference type="PDB" id="7AJU">
    <property type="method" value="EM"/>
    <property type="resolution" value="3.80 A"/>
    <property type="chains" value="UL=1-943"/>
</dbReference>
<dbReference type="PDB" id="7D4I">
    <property type="method" value="EM"/>
    <property type="resolution" value="4.00 A"/>
    <property type="chains" value="B2=1-943"/>
</dbReference>
<dbReference type="PDB" id="7D5S">
    <property type="method" value="EM"/>
    <property type="resolution" value="4.60 A"/>
    <property type="chains" value="B2=1-943"/>
</dbReference>
<dbReference type="PDB" id="7D5T">
    <property type="method" value="EM"/>
    <property type="resolution" value="6.00 A"/>
    <property type="chains" value="B2=1-943"/>
</dbReference>
<dbReference type="PDB" id="7D63">
    <property type="method" value="EM"/>
    <property type="resolution" value="12.30 A"/>
    <property type="chains" value="B2=1-943"/>
</dbReference>
<dbReference type="PDB" id="7SUK">
    <property type="method" value="EM"/>
    <property type="resolution" value="3.99 A"/>
    <property type="chains" value="LQ=5-943"/>
</dbReference>
<dbReference type="PDBsum" id="5WLC"/>
<dbReference type="PDBsum" id="5WYJ"/>
<dbReference type="PDBsum" id="5WYK"/>
<dbReference type="PDBsum" id="6KE6"/>
<dbReference type="PDBsum" id="6LQP"/>
<dbReference type="PDBsum" id="6LQQ"/>
<dbReference type="PDBsum" id="6LQR"/>
<dbReference type="PDBsum" id="6LQS"/>
<dbReference type="PDBsum" id="6LQT"/>
<dbReference type="PDBsum" id="6LQU"/>
<dbReference type="PDBsum" id="6LQV"/>
<dbReference type="PDBsum" id="6ND4"/>
<dbReference type="PDBsum" id="6ZQA"/>
<dbReference type="PDBsum" id="6ZQB"/>
<dbReference type="PDBsum" id="6ZQC"/>
<dbReference type="PDBsum" id="6ZQD"/>
<dbReference type="PDBsum" id="6ZQE"/>
<dbReference type="PDBsum" id="6ZQF"/>
<dbReference type="PDBsum" id="7AJT"/>
<dbReference type="PDBsum" id="7AJU"/>
<dbReference type="PDBsum" id="7D4I"/>
<dbReference type="PDBsum" id="7D5S"/>
<dbReference type="PDBsum" id="7D5T"/>
<dbReference type="PDBsum" id="7D63"/>
<dbReference type="PDBsum" id="7SUK"/>
<dbReference type="EMDB" id="EMD-0949"/>
<dbReference type="EMDB" id="EMD-0950"/>
<dbReference type="EMDB" id="EMD-0951"/>
<dbReference type="EMDB" id="EMD-0952"/>
<dbReference type="EMDB" id="EMD-0953"/>
<dbReference type="EMDB" id="EMD-0954"/>
<dbReference type="EMDB" id="EMD-0955"/>
<dbReference type="EMDB" id="EMD-11357"/>
<dbReference type="EMDB" id="EMD-11358"/>
<dbReference type="EMDB" id="EMD-11359"/>
<dbReference type="EMDB" id="EMD-11360"/>
<dbReference type="EMDB" id="EMD-11361"/>
<dbReference type="EMDB" id="EMD-11362"/>
<dbReference type="EMDB" id="EMD-11807"/>
<dbReference type="EMDB" id="EMD-11808"/>
<dbReference type="EMDB" id="EMD-25441"/>
<dbReference type="EMDB" id="EMD-30574"/>
<dbReference type="EMDB" id="EMD-30584"/>
<dbReference type="EMDB" id="EMD-30585"/>
<dbReference type="EMDB" id="EMD-30588"/>
<dbReference type="EMDB" id="EMD-6695"/>
<dbReference type="EMDB" id="EMD-6696"/>
<dbReference type="EMDB" id="EMD-8859"/>
<dbReference type="EMDB" id="EMD-9964"/>
<dbReference type="SMR" id="Q12220"/>
<dbReference type="BioGRID" id="31398">
    <property type="interactions" value="155"/>
</dbReference>
<dbReference type="ComplexPortal" id="CPX-1410">
    <property type="entry name" value="UTP-B complex"/>
</dbReference>
<dbReference type="DIP" id="DIP-6494N"/>
<dbReference type="FunCoup" id="Q12220">
    <property type="interactions" value="1441"/>
</dbReference>
<dbReference type="IntAct" id="Q12220">
    <property type="interactions" value="78"/>
</dbReference>
<dbReference type="MINT" id="Q12220"/>
<dbReference type="STRING" id="4932.YLR129W"/>
<dbReference type="iPTMnet" id="Q12220"/>
<dbReference type="PaxDb" id="4932-YLR129W"/>
<dbReference type="PeptideAtlas" id="Q12220"/>
<dbReference type="EnsemblFungi" id="YLR129W_mRNA">
    <property type="protein sequence ID" value="YLR129W"/>
    <property type="gene ID" value="YLR129W"/>
</dbReference>
<dbReference type="GeneID" id="850820"/>
<dbReference type="KEGG" id="sce:YLR129W"/>
<dbReference type="AGR" id="SGD:S000004119"/>
<dbReference type="SGD" id="S000004119">
    <property type="gene designation" value="DIP2"/>
</dbReference>
<dbReference type="VEuPathDB" id="FungiDB:YLR129W"/>
<dbReference type="eggNOG" id="KOG0306">
    <property type="taxonomic scope" value="Eukaryota"/>
</dbReference>
<dbReference type="GeneTree" id="ENSGT00940000153859"/>
<dbReference type="HOGENOM" id="CLU_005318_0_1_1"/>
<dbReference type="InParanoid" id="Q12220"/>
<dbReference type="OMA" id="MNIPLTC"/>
<dbReference type="OrthoDB" id="407922at2759"/>
<dbReference type="BioCyc" id="YEAST:G3O-32271-MONOMER"/>
<dbReference type="Reactome" id="R-SCE-6791226">
    <property type="pathway name" value="Major pathway of rRNA processing in the nucleolus and cytosol"/>
</dbReference>
<dbReference type="BioGRID-ORCS" id="850820">
    <property type="hits" value="4 hits in 10 CRISPR screens"/>
</dbReference>
<dbReference type="CD-CODE" id="BDAE0F88">
    <property type="entry name" value="Nucleolus"/>
</dbReference>
<dbReference type="PRO" id="PR:Q12220"/>
<dbReference type="Proteomes" id="UP000002311">
    <property type="component" value="Chromosome XII"/>
</dbReference>
<dbReference type="RNAct" id="Q12220">
    <property type="molecule type" value="protein"/>
</dbReference>
<dbReference type="GO" id="GO:0030686">
    <property type="term" value="C:90S preribosome"/>
    <property type="evidence" value="ECO:0007005"/>
    <property type="project" value="SGD"/>
</dbReference>
<dbReference type="GO" id="GO:0005730">
    <property type="term" value="C:nucleolus"/>
    <property type="evidence" value="ECO:0000314"/>
    <property type="project" value="SGD"/>
</dbReference>
<dbReference type="GO" id="GO:0005654">
    <property type="term" value="C:nucleoplasm"/>
    <property type="evidence" value="ECO:0000304"/>
    <property type="project" value="Reactome"/>
</dbReference>
<dbReference type="GO" id="GO:0034388">
    <property type="term" value="C:Pwp2p-containing subcomplex of 90S preribosome"/>
    <property type="evidence" value="ECO:0000314"/>
    <property type="project" value="SGD"/>
</dbReference>
<dbReference type="GO" id="GO:0032040">
    <property type="term" value="C:small-subunit processome"/>
    <property type="evidence" value="ECO:0000314"/>
    <property type="project" value="SGD"/>
</dbReference>
<dbReference type="GO" id="GO:0030515">
    <property type="term" value="F:snoRNA binding"/>
    <property type="evidence" value="ECO:0000318"/>
    <property type="project" value="GO_Central"/>
</dbReference>
<dbReference type="GO" id="GO:0034511">
    <property type="term" value="F:U3 snoRNA binding"/>
    <property type="evidence" value="ECO:0000314"/>
    <property type="project" value="SGD"/>
</dbReference>
<dbReference type="GO" id="GO:0000480">
    <property type="term" value="P:endonucleolytic cleavage in 5'-ETS of tricistronic rRNA transcript (SSU-rRNA, 5.8S rRNA, LSU-rRNA)"/>
    <property type="evidence" value="ECO:0000315"/>
    <property type="project" value="SGD"/>
</dbReference>
<dbReference type="GO" id="GO:0000447">
    <property type="term" value="P:endonucleolytic cleavage in ITS1 to separate SSU-rRNA from 5.8S rRNA and LSU-rRNA from tricistronic rRNA transcript (SSU-rRNA, 5.8S rRNA, LSU-rRNA)"/>
    <property type="evidence" value="ECO:0000315"/>
    <property type="project" value="SGD"/>
</dbReference>
<dbReference type="GO" id="GO:0000472">
    <property type="term" value="P:endonucleolytic cleavage to generate mature 5'-end of SSU-rRNA from (SSU-rRNA, 5.8S rRNA, LSU-rRNA)"/>
    <property type="evidence" value="ECO:0000315"/>
    <property type="project" value="SGD"/>
</dbReference>
<dbReference type="GO" id="GO:0030490">
    <property type="term" value="P:maturation of SSU-rRNA"/>
    <property type="evidence" value="ECO:0000318"/>
    <property type="project" value="GO_Central"/>
</dbReference>
<dbReference type="GO" id="GO:0000462">
    <property type="term" value="P:maturation of SSU-rRNA from tricistronic rRNA transcript (SSU-rRNA, 5.8S rRNA, LSU-rRNA)"/>
    <property type="evidence" value="ECO:0000315"/>
    <property type="project" value="SGD"/>
</dbReference>
<dbReference type="CDD" id="cd00200">
    <property type="entry name" value="WD40"/>
    <property type="match status" value="1"/>
</dbReference>
<dbReference type="FunFam" id="2.130.10.10:FF:001015">
    <property type="entry name" value="DIP2p Nucleolar protein"/>
    <property type="match status" value="1"/>
</dbReference>
<dbReference type="FunFam" id="2.130.10.10:FF:001139">
    <property type="entry name" value="DIP2p Nucleolar protein"/>
    <property type="match status" value="1"/>
</dbReference>
<dbReference type="FunFam" id="2.130.10.10:FF:000157">
    <property type="entry name" value="WD repeat domain 3"/>
    <property type="match status" value="1"/>
</dbReference>
<dbReference type="FunFam" id="2.130.10.10:FF:000178">
    <property type="entry name" value="WD repeat domain 3"/>
    <property type="match status" value="1"/>
</dbReference>
<dbReference type="Gene3D" id="2.130.10.10">
    <property type="entry name" value="YVTN repeat-like/Quinoprotein amine dehydrogenase"/>
    <property type="match status" value="4"/>
</dbReference>
<dbReference type="InterPro" id="IPR020472">
    <property type="entry name" value="G-protein_beta_WD-40_rep"/>
</dbReference>
<dbReference type="InterPro" id="IPR007148">
    <property type="entry name" value="SSU_processome_Utp12"/>
</dbReference>
<dbReference type="InterPro" id="IPR051570">
    <property type="entry name" value="TBC1_cilium_biogenesis"/>
</dbReference>
<dbReference type="InterPro" id="IPR015943">
    <property type="entry name" value="WD40/YVTN_repeat-like_dom_sf"/>
</dbReference>
<dbReference type="InterPro" id="IPR019775">
    <property type="entry name" value="WD40_repeat_CS"/>
</dbReference>
<dbReference type="InterPro" id="IPR036322">
    <property type="entry name" value="WD40_repeat_dom_sf"/>
</dbReference>
<dbReference type="InterPro" id="IPR001680">
    <property type="entry name" value="WD40_rpt"/>
</dbReference>
<dbReference type="PANTHER" id="PTHR19853">
    <property type="entry name" value="WD REPEAT CONTAINING PROTEIN 3 WDR3"/>
    <property type="match status" value="1"/>
</dbReference>
<dbReference type="PANTHER" id="PTHR19853:SF0">
    <property type="entry name" value="WD REPEAT-CONTAINING PROTEIN 3"/>
    <property type="match status" value="1"/>
</dbReference>
<dbReference type="Pfam" id="PF25173">
    <property type="entry name" value="Beta-prop_WDR3_1st"/>
    <property type="match status" value="1"/>
</dbReference>
<dbReference type="Pfam" id="PF25172">
    <property type="entry name" value="Beta-prop_WDR3_2nd"/>
    <property type="match status" value="1"/>
</dbReference>
<dbReference type="Pfam" id="PF04003">
    <property type="entry name" value="Utp12"/>
    <property type="match status" value="1"/>
</dbReference>
<dbReference type="PRINTS" id="PR00320">
    <property type="entry name" value="GPROTEINBRPT"/>
</dbReference>
<dbReference type="SMART" id="SM00320">
    <property type="entry name" value="WD40"/>
    <property type="match status" value="11"/>
</dbReference>
<dbReference type="SUPFAM" id="SSF117289">
    <property type="entry name" value="Nucleoporin domain"/>
    <property type="match status" value="1"/>
</dbReference>
<dbReference type="SUPFAM" id="SSF50978">
    <property type="entry name" value="WD40 repeat-like"/>
    <property type="match status" value="1"/>
</dbReference>
<dbReference type="PROSITE" id="PS00678">
    <property type="entry name" value="WD_REPEATS_1"/>
    <property type="match status" value="4"/>
</dbReference>
<dbReference type="PROSITE" id="PS50082">
    <property type="entry name" value="WD_REPEATS_2"/>
    <property type="match status" value="8"/>
</dbReference>
<dbReference type="PROSITE" id="PS50294">
    <property type="entry name" value="WD_REPEATS_REGION"/>
    <property type="match status" value="1"/>
</dbReference>
<reference key="1">
    <citation type="journal article" date="1997" name="Nature">
        <title>The nucleotide sequence of Saccharomyces cerevisiae chromosome XII.</title>
        <authorList>
            <person name="Johnston M."/>
            <person name="Hillier L.W."/>
            <person name="Riles L."/>
            <person name="Albermann K."/>
            <person name="Andre B."/>
            <person name="Ansorge W."/>
            <person name="Benes V."/>
            <person name="Brueckner M."/>
            <person name="Delius H."/>
            <person name="Dubois E."/>
            <person name="Duesterhoeft A."/>
            <person name="Entian K.-D."/>
            <person name="Floeth M."/>
            <person name="Goffeau A."/>
            <person name="Hebling U."/>
            <person name="Heumann K."/>
            <person name="Heuss-Neitzel D."/>
            <person name="Hilbert H."/>
            <person name="Hilger F."/>
            <person name="Kleine K."/>
            <person name="Koetter P."/>
            <person name="Louis E.J."/>
            <person name="Messenguy F."/>
            <person name="Mewes H.-W."/>
            <person name="Miosga T."/>
            <person name="Moestl D."/>
            <person name="Mueller-Auer S."/>
            <person name="Nentwich U."/>
            <person name="Obermaier B."/>
            <person name="Piravandi E."/>
            <person name="Pohl T.M."/>
            <person name="Portetelle D."/>
            <person name="Purnelle B."/>
            <person name="Rechmann S."/>
            <person name="Rieger M."/>
            <person name="Rinke M."/>
            <person name="Rose M."/>
            <person name="Scharfe M."/>
            <person name="Scherens B."/>
            <person name="Scholler P."/>
            <person name="Schwager C."/>
            <person name="Schwarz S."/>
            <person name="Underwood A.P."/>
            <person name="Urrestarazu L.A."/>
            <person name="Vandenbol M."/>
            <person name="Verhasselt P."/>
            <person name="Vierendeels F."/>
            <person name="Voet M."/>
            <person name="Volckaert G."/>
            <person name="Voss H."/>
            <person name="Wambutt R."/>
            <person name="Wedler E."/>
            <person name="Wedler H."/>
            <person name="Zimmermann F.K."/>
            <person name="Zollner A."/>
            <person name="Hani J."/>
            <person name="Hoheisel J.D."/>
        </authorList>
    </citation>
    <scope>NUCLEOTIDE SEQUENCE [LARGE SCALE GENOMIC DNA]</scope>
    <source>
        <strain>ATCC 204508 / S288c</strain>
    </source>
</reference>
<reference key="2">
    <citation type="journal article" date="2014" name="G3 (Bethesda)">
        <title>The reference genome sequence of Saccharomyces cerevisiae: Then and now.</title>
        <authorList>
            <person name="Engel S.R."/>
            <person name="Dietrich F.S."/>
            <person name="Fisk D.G."/>
            <person name="Binkley G."/>
            <person name="Balakrishnan R."/>
            <person name="Costanzo M.C."/>
            <person name="Dwight S.S."/>
            <person name="Hitz B.C."/>
            <person name="Karra K."/>
            <person name="Nash R.S."/>
            <person name="Weng S."/>
            <person name="Wong E.D."/>
            <person name="Lloyd P."/>
            <person name="Skrzypek M.S."/>
            <person name="Miyasato S.R."/>
            <person name="Simison M."/>
            <person name="Cherry J.M."/>
        </authorList>
    </citation>
    <scope>GENOME REANNOTATION</scope>
    <source>
        <strain>ATCC 204508 / S288c</strain>
    </source>
</reference>
<reference key="3">
    <citation type="journal article" date="2002" name="Nature">
        <title>A large nucleolar U3 ribonucleoprotein required for 18S ribosomal RNA biogenesis.</title>
        <authorList>
            <person name="Dragon F."/>
            <person name="Gallagher J.E.G."/>
            <person name="Compagnone-Post P.A."/>
            <person name="Mitchell B.M."/>
            <person name="Porwancher K.A."/>
            <person name="Wehner K.A."/>
            <person name="Wormsley S."/>
            <person name="Settlage R.E."/>
            <person name="Shabanowitz J."/>
            <person name="Osheim Y."/>
            <person name="Beyer A.L."/>
            <person name="Hunt D.F."/>
            <person name="Baserga S.J."/>
        </authorList>
    </citation>
    <scope>FUNCTION</scope>
    <scope>INTERACTION WITH MPP10 AND SNORNA U3</scope>
    <scope>IDENTIFICATION IN SSU PROCESSOME BY MASS SPECTROMETRY</scope>
    <scope>SUBCELLULAR LOCATION</scope>
</reference>
<reference key="4">
    <citation type="journal article" date="2003" name="Nature">
        <title>Global analysis of protein expression in yeast.</title>
        <authorList>
            <person name="Ghaemmaghami S."/>
            <person name="Huh W.-K."/>
            <person name="Bower K."/>
            <person name="Howson R.W."/>
            <person name="Belle A."/>
            <person name="Dephoure N."/>
            <person name="O'Shea E.K."/>
            <person name="Weissman J.S."/>
        </authorList>
    </citation>
    <scope>LEVEL OF PROTEIN EXPRESSION [LARGE SCALE ANALYSIS]</scope>
</reference>
<feature type="chain" id="PRO_0000050955" description="U3 small nucleolar RNA-associated protein 12">
    <location>
        <begin position="1"/>
        <end position="943"/>
    </location>
</feature>
<feature type="repeat" description="WD 1">
    <location>
        <begin position="77"/>
        <end position="107"/>
    </location>
</feature>
<feature type="repeat" description="WD 2">
    <location>
        <begin position="119"/>
        <end position="149"/>
    </location>
</feature>
<feature type="repeat" description="WD 3">
    <location>
        <begin position="161"/>
        <end position="190"/>
    </location>
</feature>
<feature type="repeat" description="WD 4">
    <location>
        <begin position="202"/>
        <end position="230"/>
    </location>
</feature>
<feature type="repeat" description="WD 5">
    <location>
        <begin position="389"/>
        <end position="418"/>
    </location>
</feature>
<feature type="repeat" description="WD 6">
    <location>
        <begin position="428"/>
        <end position="458"/>
    </location>
</feature>
<feature type="repeat" description="WD 7">
    <location>
        <begin position="471"/>
        <end position="501"/>
    </location>
</feature>
<feature type="repeat" description="WD 8">
    <location>
        <begin position="571"/>
        <end position="601"/>
    </location>
</feature>
<feature type="repeat" description="WD 9">
    <location>
        <begin position="613"/>
        <end position="643"/>
    </location>
</feature>
<feature type="repeat" description="WD 10">
    <location>
        <begin position="655"/>
        <end position="685"/>
    </location>
</feature>
<feature type="region of interest" description="Disordered" evidence="1">
    <location>
        <begin position="715"/>
        <end position="739"/>
    </location>
</feature>
<organism>
    <name type="scientific">Saccharomyces cerevisiae (strain ATCC 204508 / S288c)</name>
    <name type="common">Baker's yeast</name>
    <dbReference type="NCBI Taxonomy" id="559292"/>
    <lineage>
        <taxon>Eukaryota</taxon>
        <taxon>Fungi</taxon>
        <taxon>Dikarya</taxon>
        <taxon>Ascomycota</taxon>
        <taxon>Saccharomycotina</taxon>
        <taxon>Saccharomycetes</taxon>
        <taxon>Saccharomycetales</taxon>
        <taxon>Saccharomycetaceae</taxon>
        <taxon>Saccharomyces</taxon>
    </lineage>
</organism>
<keyword id="KW-0002">3D-structure</keyword>
<keyword id="KW-0539">Nucleus</keyword>
<keyword id="KW-1185">Reference proteome</keyword>
<keyword id="KW-0677">Repeat</keyword>
<keyword id="KW-0687">Ribonucleoprotein</keyword>
<keyword id="KW-0690">Ribosome biogenesis</keyword>
<keyword id="KW-0698">rRNA processing</keyword>
<keyword id="KW-0853">WD repeat</keyword>